<protein>
    <recommendedName>
        <fullName evidence="1">dITP/XTP pyrophosphatase</fullName>
        <ecNumber evidence="1">3.6.1.66</ecNumber>
    </recommendedName>
    <alternativeName>
        <fullName evidence="1">Non-canonical purine NTP pyrophosphatase</fullName>
    </alternativeName>
    <alternativeName>
        <fullName evidence="1">Non-standard purine NTP pyrophosphatase</fullName>
    </alternativeName>
    <alternativeName>
        <fullName evidence="1">Nucleoside-triphosphate diphosphatase</fullName>
    </alternativeName>
    <alternativeName>
        <fullName evidence="1">Nucleoside-triphosphate pyrophosphatase</fullName>
        <shortName evidence="1">NTPase</shortName>
    </alternativeName>
</protein>
<dbReference type="EC" id="3.6.1.66" evidence="1"/>
<dbReference type="EMBL" id="BA000022">
    <property type="protein sequence ID" value="BAA18532.1"/>
    <property type="molecule type" value="Genomic_DNA"/>
</dbReference>
<dbReference type="PIR" id="S76403">
    <property type="entry name" value="S76403"/>
</dbReference>
<dbReference type="SMR" id="P74432"/>
<dbReference type="FunCoup" id="P74432">
    <property type="interactions" value="395"/>
</dbReference>
<dbReference type="STRING" id="1148.gene:10499414"/>
<dbReference type="PaxDb" id="1148-1653620"/>
<dbReference type="EnsemblBacteria" id="BAA18532">
    <property type="protein sequence ID" value="BAA18532"/>
    <property type="gene ID" value="BAA18532"/>
</dbReference>
<dbReference type="KEGG" id="syn:slr0402"/>
<dbReference type="eggNOG" id="COG0127">
    <property type="taxonomic scope" value="Bacteria"/>
</dbReference>
<dbReference type="InParanoid" id="P74432"/>
<dbReference type="PhylomeDB" id="P74432"/>
<dbReference type="Proteomes" id="UP000001425">
    <property type="component" value="Chromosome"/>
</dbReference>
<dbReference type="GO" id="GO:0005737">
    <property type="term" value="C:cytoplasm"/>
    <property type="evidence" value="ECO:0000318"/>
    <property type="project" value="GO_Central"/>
</dbReference>
<dbReference type="GO" id="GO:0005829">
    <property type="term" value="C:cytosol"/>
    <property type="evidence" value="ECO:0000318"/>
    <property type="project" value="GO_Central"/>
</dbReference>
<dbReference type="GO" id="GO:0035870">
    <property type="term" value="F:dITP diphosphatase activity"/>
    <property type="evidence" value="ECO:0007669"/>
    <property type="project" value="RHEA"/>
</dbReference>
<dbReference type="GO" id="GO:0036220">
    <property type="term" value="F:ITP diphosphatase activity"/>
    <property type="evidence" value="ECO:0007669"/>
    <property type="project" value="UniProtKB-EC"/>
</dbReference>
<dbReference type="GO" id="GO:0046872">
    <property type="term" value="F:metal ion binding"/>
    <property type="evidence" value="ECO:0007669"/>
    <property type="project" value="UniProtKB-KW"/>
</dbReference>
<dbReference type="GO" id="GO:0047429">
    <property type="term" value="F:nucleoside triphosphate diphosphatase activity"/>
    <property type="evidence" value="ECO:0000318"/>
    <property type="project" value="GO_Central"/>
</dbReference>
<dbReference type="GO" id="GO:0000166">
    <property type="term" value="F:nucleotide binding"/>
    <property type="evidence" value="ECO:0007669"/>
    <property type="project" value="UniProtKB-KW"/>
</dbReference>
<dbReference type="GO" id="GO:0017111">
    <property type="term" value="F:ribonucleoside triphosphate phosphatase activity"/>
    <property type="evidence" value="ECO:0007669"/>
    <property type="project" value="InterPro"/>
</dbReference>
<dbReference type="GO" id="GO:0036222">
    <property type="term" value="F:XTP diphosphatase activity"/>
    <property type="evidence" value="ECO:0007669"/>
    <property type="project" value="RHEA"/>
</dbReference>
<dbReference type="GO" id="GO:0009143">
    <property type="term" value="P:nucleoside triphosphate catabolic process"/>
    <property type="evidence" value="ECO:0000318"/>
    <property type="project" value="GO_Central"/>
</dbReference>
<dbReference type="GO" id="GO:0009117">
    <property type="term" value="P:nucleotide metabolic process"/>
    <property type="evidence" value="ECO:0007669"/>
    <property type="project" value="UniProtKB-KW"/>
</dbReference>
<dbReference type="GO" id="GO:0009146">
    <property type="term" value="P:purine nucleoside triphosphate catabolic process"/>
    <property type="evidence" value="ECO:0007669"/>
    <property type="project" value="UniProtKB-UniRule"/>
</dbReference>
<dbReference type="CDD" id="cd00515">
    <property type="entry name" value="HAM1"/>
    <property type="match status" value="1"/>
</dbReference>
<dbReference type="FunFam" id="3.90.950.10:FF:000001">
    <property type="entry name" value="dITP/XTP pyrophosphatase"/>
    <property type="match status" value="1"/>
</dbReference>
<dbReference type="Gene3D" id="3.90.950.10">
    <property type="match status" value="1"/>
</dbReference>
<dbReference type="HAMAP" id="MF_01405">
    <property type="entry name" value="Non_canon_purine_NTPase"/>
    <property type="match status" value="1"/>
</dbReference>
<dbReference type="InterPro" id="IPR020922">
    <property type="entry name" value="dITP/XTP_pyrophosphatase"/>
</dbReference>
<dbReference type="InterPro" id="IPR029001">
    <property type="entry name" value="ITPase-like_fam"/>
</dbReference>
<dbReference type="InterPro" id="IPR002637">
    <property type="entry name" value="RdgB/HAM1"/>
</dbReference>
<dbReference type="NCBIfam" id="TIGR00042">
    <property type="entry name" value="RdgB/HAM1 family non-canonical purine NTP pyrophosphatase"/>
    <property type="match status" value="1"/>
</dbReference>
<dbReference type="PANTHER" id="PTHR11067:SF9">
    <property type="entry name" value="INOSINE TRIPHOSPHATE PYROPHOSPHATASE"/>
    <property type="match status" value="1"/>
</dbReference>
<dbReference type="PANTHER" id="PTHR11067">
    <property type="entry name" value="INOSINE TRIPHOSPHATE PYROPHOSPHATASE/HAM1 PROTEIN"/>
    <property type="match status" value="1"/>
</dbReference>
<dbReference type="Pfam" id="PF01725">
    <property type="entry name" value="Ham1p_like"/>
    <property type="match status" value="1"/>
</dbReference>
<dbReference type="SUPFAM" id="SSF52972">
    <property type="entry name" value="ITPase-like"/>
    <property type="match status" value="1"/>
</dbReference>
<feature type="chain" id="PRO_0000178251" description="dITP/XTP pyrophosphatase">
    <location>
        <begin position="1"/>
        <end position="194"/>
    </location>
</feature>
<feature type="active site" description="Proton acceptor" evidence="1">
    <location>
        <position position="67"/>
    </location>
</feature>
<feature type="binding site" evidence="1">
    <location>
        <begin position="8"/>
        <end position="13"/>
    </location>
    <ligand>
        <name>substrate</name>
    </ligand>
</feature>
<feature type="binding site" evidence="1">
    <location>
        <position position="38"/>
    </location>
    <ligand>
        <name>Mg(2+)</name>
        <dbReference type="ChEBI" id="CHEBI:18420"/>
    </ligand>
</feature>
<feature type="binding site" evidence="1">
    <location>
        <position position="67"/>
    </location>
    <ligand>
        <name>Mg(2+)</name>
        <dbReference type="ChEBI" id="CHEBI:18420"/>
    </ligand>
</feature>
<feature type="binding site" evidence="1">
    <location>
        <position position="68"/>
    </location>
    <ligand>
        <name>substrate</name>
    </ligand>
</feature>
<feature type="binding site" evidence="1">
    <location>
        <begin position="146"/>
        <end position="149"/>
    </location>
    <ligand>
        <name>substrate</name>
    </ligand>
</feature>
<feature type="binding site" evidence="1">
    <location>
        <position position="169"/>
    </location>
    <ligand>
        <name>substrate</name>
    </ligand>
</feature>
<feature type="binding site" evidence="1">
    <location>
        <begin position="174"/>
        <end position="175"/>
    </location>
    <ligand>
        <name>substrate</name>
    </ligand>
</feature>
<keyword id="KW-0378">Hydrolase</keyword>
<keyword id="KW-0460">Magnesium</keyword>
<keyword id="KW-0479">Metal-binding</keyword>
<keyword id="KW-0546">Nucleotide metabolism</keyword>
<keyword id="KW-0547">Nucleotide-binding</keyword>
<keyword id="KW-1185">Reference proteome</keyword>
<proteinExistence type="inferred from homology"/>
<evidence type="ECO:0000255" key="1">
    <source>
        <dbReference type="HAMAP-Rule" id="MF_01405"/>
    </source>
</evidence>
<comment type="function">
    <text evidence="1">Pyrophosphatase that catalyzes the hydrolysis of nucleoside triphosphates to their monophosphate derivatives, with a high preference for the non-canonical purine nucleotides XTP (xanthosine triphosphate), dITP (deoxyinosine triphosphate) and ITP. Seems to function as a house-cleaning enzyme that removes non-canonical purine nucleotides from the nucleotide pool, thus preventing their incorporation into DNA/RNA and avoiding chromosomal lesions.</text>
</comment>
<comment type="catalytic activity">
    <reaction evidence="1">
        <text>XTP + H2O = XMP + diphosphate + H(+)</text>
        <dbReference type="Rhea" id="RHEA:28610"/>
        <dbReference type="ChEBI" id="CHEBI:15377"/>
        <dbReference type="ChEBI" id="CHEBI:15378"/>
        <dbReference type="ChEBI" id="CHEBI:33019"/>
        <dbReference type="ChEBI" id="CHEBI:57464"/>
        <dbReference type="ChEBI" id="CHEBI:61314"/>
        <dbReference type="EC" id="3.6.1.66"/>
    </reaction>
</comment>
<comment type="catalytic activity">
    <reaction evidence="1">
        <text>dITP + H2O = dIMP + diphosphate + H(+)</text>
        <dbReference type="Rhea" id="RHEA:28342"/>
        <dbReference type="ChEBI" id="CHEBI:15377"/>
        <dbReference type="ChEBI" id="CHEBI:15378"/>
        <dbReference type="ChEBI" id="CHEBI:33019"/>
        <dbReference type="ChEBI" id="CHEBI:61194"/>
        <dbReference type="ChEBI" id="CHEBI:61382"/>
        <dbReference type="EC" id="3.6.1.66"/>
    </reaction>
</comment>
<comment type="catalytic activity">
    <reaction evidence="1">
        <text>ITP + H2O = IMP + diphosphate + H(+)</text>
        <dbReference type="Rhea" id="RHEA:29399"/>
        <dbReference type="ChEBI" id="CHEBI:15377"/>
        <dbReference type="ChEBI" id="CHEBI:15378"/>
        <dbReference type="ChEBI" id="CHEBI:33019"/>
        <dbReference type="ChEBI" id="CHEBI:58053"/>
        <dbReference type="ChEBI" id="CHEBI:61402"/>
        <dbReference type="EC" id="3.6.1.66"/>
    </reaction>
</comment>
<comment type="cofactor">
    <cofactor evidence="1">
        <name>Mg(2+)</name>
        <dbReference type="ChEBI" id="CHEBI:18420"/>
    </cofactor>
    <text evidence="1">Binds 1 Mg(2+) ion per subunit.</text>
</comment>
<comment type="subunit">
    <text evidence="1">Homodimer.</text>
</comment>
<comment type="similarity">
    <text evidence="1">Belongs to the HAM1 NTPase family.</text>
</comment>
<accession>P74432</accession>
<gene>
    <name type="ordered locus">slr0402</name>
</gene>
<reference key="1">
    <citation type="journal article" date="1996" name="DNA Res.">
        <title>Sequence analysis of the genome of the unicellular cyanobacterium Synechocystis sp. strain PCC6803. II. Sequence determination of the entire genome and assignment of potential protein-coding regions.</title>
        <authorList>
            <person name="Kaneko T."/>
            <person name="Sato S."/>
            <person name="Kotani H."/>
            <person name="Tanaka A."/>
            <person name="Asamizu E."/>
            <person name="Nakamura Y."/>
            <person name="Miyajima N."/>
            <person name="Hirosawa M."/>
            <person name="Sugiura M."/>
            <person name="Sasamoto S."/>
            <person name="Kimura T."/>
            <person name="Hosouchi T."/>
            <person name="Matsuno A."/>
            <person name="Muraki A."/>
            <person name="Nakazaki N."/>
            <person name="Naruo K."/>
            <person name="Okumura S."/>
            <person name="Shimpo S."/>
            <person name="Takeuchi C."/>
            <person name="Wada T."/>
            <person name="Watanabe A."/>
            <person name="Yamada M."/>
            <person name="Yasuda M."/>
            <person name="Tabata S."/>
        </authorList>
    </citation>
    <scope>NUCLEOTIDE SEQUENCE [LARGE SCALE GENOMIC DNA]</scope>
    <source>
        <strain>ATCC 27184 / PCC 6803 / Kazusa</strain>
    </source>
</reference>
<organism>
    <name type="scientific">Synechocystis sp. (strain ATCC 27184 / PCC 6803 / Kazusa)</name>
    <dbReference type="NCBI Taxonomy" id="1111708"/>
    <lineage>
        <taxon>Bacteria</taxon>
        <taxon>Bacillati</taxon>
        <taxon>Cyanobacteriota</taxon>
        <taxon>Cyanophyceae</taxon>
        <taxon>Synechococcales</taxon>
        <taxon>Merismopediaceae</taxon>
        <taxon>Synechocystis</taxon>
    </lineage>
</organism>
<sequence length="194" mass="21188">MPTLIVATGNPGKLAEMQTYLEPLGCQLTLKPTEIEVEETGSTFYENACLKASQVAKAVNQWAIADDSGLAVDALDGAPGLYSARYGNTDRERIAKLLQALEGVSQRQAQFICVVSIAAPDGSIQLSTKGICSGEITHSPRGDQGFGYDPIFWLPEHKKTFAEMTKVEKQKVSHRGKAFNKLIHQWPGLKFDSF</sequence>
<name>IXTPA_SYNY3</name>